<feature type="chain" id="PRO_0000103033" description="SsrA-binding protein">
    <location>
        <begin position="1"/>
        <end position="154"/>
    </location>
</feature>
<comment type="function">
    <text evidence="1">Required for rescue of stalled ribosomes mediated by trans-translation. Binds to transfer-messenger RNA (tmRNA), required for stable association of tmRNA with ribosomes. tmRNA and SmpB together mimic tRNA shape, replacing the anticodon stem-loop with SmpB. tmRNA is encoded by the ssrA gene; the 2 termini fold to resemble tRNA(Ala) and it encodes a 'tag peptide', a short internal open reading frame. During trans-translation Ala-aminoacylated tmRNA acts like a tRNA, entering the A-site of stalled ribosomes, displacing the stalled mRNA. The ribosome then switches to translate the ORF on the tmRNA; the nascent peptide is terminated with the 'tag peptide' encoded by the tmRNA and targeted for degradation. The ribosome is freed to recommence translation, which seems to be the essential function of trans-translation.</text>
</comment>
<comment type="subcellular location">
    <subcellularLocation>
        <location evidence="1">Cytoplasm</location>
    </subcellularLocation>
    <text evidence="1">The tmRNA-SmpB complex associates with stalled 70S ribosomes.</text>
</comment>
<comment type="similarity">
    <text evidence="1">Belongs to the SmpB family.</text>
</comment>
<proteinExistence type="inferred from homology"/>
<reference key="1">
    <citation type="journal article" date="2002" name="Lancet">
        <title>Genome and virulence determinants of high virulence community-acquired MRSA.</title>
        <authorList>
            <person name="Baba T."/>
            <person name="Takeuchi F."/>
            <person name="Kuroda M."/>
            <person name="Yuzawa H."/>
            <person name="Aoki K."/>
            <person name="Oguchi A."/>
            <person name="Nagai Y."/>
            <person name="Iwama N."/>
            <person name="Asano K."/>
            <person name="Naimi T."/>
            <person name="Kuroda H."/>
            <person name="Cui L."/>
            <person name="Yamamoto K."/>
            <person name="Hiramatsu K."/>
        </authorList>
    </citation>
    <scope>NUCLEOTIDE SEQUENCE [LARGE SCALE GENOMIC DNA]</scope>
    <source>
        <strain>MW2</strain>
    </source>
</reference>
<dbReference type="EMBL" id="BA000033">
    <property type="protein sequence ID" value="BAB94608.1"/>
    <property type="molecule type" value="Genomic_DNA"/>
</dbReference>
<dbReference type="RefSeq" id="WP_001085185.1">
    <property type="nucleotide sequence ID" value="NC_003923.1"/>
</dbReference>
<dbReference type="SMR" id="Q8NXL2"/>
<dbReference type="KEGG" id="sam:MW0743"/>
<dbReference type="HOGENOM" id="CLU_108953_0_0_9"/>
<dbReference type="GO" id="GO:0005829">
    <property type="term" value="C:cytosol"/>
    <property type="evidence" value="ECO:0007669"/>
    <property type="project" value="TreeGrafter"/>
</dbReference>
<dbReference type="GO" id="GO:0003723">
    <property type="term" value="F:RNA binding"/>
    <property type="evidence" value="ECO:0007669"/>
    <property type="project" value="UniProtKB-UniRule"/>
</dbReference>
<dbReference type="GO" id="GO:0070929">
    <property type="term" value="P:trans-translation"/>
    <property type="evidence" value="ECO:0007669"/>
    <property type="project" value="UniProtKB-UniRule"/>
</dbReference>
<dbReference type="CDD" id="cd09294">
    <property type="entry name" value="SmpB"/>
    <property type="match status" value="1"/>
</dbReference>
<dbReference type="Gene3D" id="2.40.280.10">
    <property type="match status" value="1"/>
</dbReference>
<dbReference type="HAMAP" id="MF_00023">
    <property type="entry name" value="SmpB"/>
    <property type="match status" value="1"/>
</dbReference>
<dbReference type="InterPro" id="IPR023620">
    <property type="entry name" value="SmpB"/>
</dbReference>
<dbReference type="InterPro" id="IPR000037">
    <property type="entry name" value="SsrA-bd_prot"/>
</dbReference>
<dbReference type="InterPro" id="IPR020081">
    <property type="entry name" value="SsrA-bd_prot_CS"/>
</dbReference>
<dbReference type="NCBIfam" id="NF003843">
    <property type="entry name" value="PRK05422.1"/>
    <property type="match status" value="1"/>
</dbReference>
<dbReference type="NCBIfam" id="TIGR00086">
    <property type="entry name" value="smpB"/>
    <property type="match status" value="1"/>
</dbReference>
<dbReference type="PANTHER" id="PTHR30308:SF2">
    <property type="entry name" value="SSRA-BINDING PROTEIN"/>
    <property type="match status" value="1"/>
</dbReference>
<dbReference type="PANTHER" id="PTHR30308">
    <property type="entry name" value="TMRNA-BINDING COMPONENT OF TRANS-TRANSLATION TAGGING COMPLEX"/>
    <property type="match status" value="1"/>
</dbReference>
<dbReference type="Pfam" id="PF01668">
    <property type="entry name" value="SmpB"/>
    <property type="match status" value="1"/>
</dbReference>
<dbReference type="SUPFAM" id="SSF74982">
    <property type="entry name" value="Small protein B (SmpB)"/>
    <property type="match status" value="1"/>
</dbReference>
<dbReference type="PROSITE" id="PS01317">
    <property type="entry name" value="SSRP"/>
    <property type="match status" value="1"/>
</dbReference>
<evidence type="ECO:0000255" key="1">
    <source>
        <dbReference type="HAMAP-Rule" id="MF_00023"/>
    </source>
</evidence>
<accession>Q8NXL2</accession>
<protein>
    <recommendedName>
        <fullName evidence="1">SsrA-binding protein</fullName>
    </recommendedName>
    <alternativeName>
        <fullName evidence="1">Small protein B</fullName>
    </alternativeName>
</protein>
<gene>
    <name evidence="1" type="primary">smpB</name>
    <name type="synonym">ssrP</name>
    <name type="ordered locus">MW0743</name>
</gene>
<keyword id="KW-0963">Cytoplasm</keyword>
<keyword id="KW-0694">RNA-binding</keyword>
<organism>
    <name type="scientific">Staphylococcus aureus (strain MW2)</name>
    <dbReference type="NCBI Taxonomy" id="196620"/>
    <lineage>
        <taxon>Bacteria</taxon>
        <taxon>Bacillati</taxon>
        <taxon>Bacillota</taxon>
        <taxon>Bacilli</taxon>
        <taxon>Bacillales</taxon>
        <taxon>Staphylococcaceae</taxon>
        <taxon>Staphylococcus</taxon>
    </lineage>
</organism>
<name>SSRP_STAAW</name>
<sequence>MAKKKSPGTLAENRKARHDYNIEDTIEAGIVLQGTEIKSIRRGSANLKDSYAQVKNGEMYLNNMHIAPYEEGNRFNHDPLRSRKLLLHKREIIKLGDQTREIGYSIVPLKLYLKHGHCKVLLGVARGKKKYDKRQALKEKAVKRDVARDMKARY</sequence>